<keyword id="KW-0067">ATP-binding</keyword>
<keyword id="KW-0150">Chloroplast</keyword>
<keyword id="KW-0324">Glycolysis</keyword>
<keyword id="KW-0418">Kinase</keyword>
<keyword id="KW-0460">Magnesium</keyword>
<keyword id="KW-0479">Metal-binding</keyword>
<keyword id="KW-0547">Nucleotide-binding</keyword>
<keyword id="KW-0934">Plastid</keyword>
<keyword id="KW-0630">Potassium</keyword>
<keyword id="KW-0670">Pyruvate</keyword>
<keyword id="KW-1185">Reference proteome</keyword>
<keyword id="KW-0808">Transferase</keyword>
<keyword id="KW-0809">Transit peptide</keyword>
<reference key="1">
    <citation type="journal article" date="1995" name="Plant Mol. Biol.">
        <title>Molecular characterization of plastid pyruvate kinase from castor and tobacco.</title>
        <authorList>
            <person name="Blakeley S.D."/>
            <person name="Gottlob-Mchugh S."/>
            <person name="Wan J."/>
            <person name="Crews L."/>
            <person name="Miki B."/>
            <person name="Ko K."/>
            <person name="Dennis D.T."/>
        </authorList>
    </citation>
    <scope>NUCLEOTIDE SEQUENCE [MRNA]</scope>
    <source>
        <strain>cv. Petit Havana SR1</strain>
        <tissue>Seed</tissue>
    </source>
</reference>
<protein>
    <recommendedName>
        <fullName>Pyruvate kinase isozyme A, chloroplastic</fullName>
        <ecNumber>2.7.1.40</ecNumber>
    </recommendedName>
</protein>
<comment type="catalytic activity">
    <reaction>
        <text>pyruvate + ATP = phosphoenolpyruvate + ADP + H(+)</text>
        <dbReference type="Rhea" id="RHEA:18157"/>
        <dbReference type="ChEBI" id="CHEBI:15361"/>
        <dbReference type="ChEBI" id="CHEBI:15378"/>
        <dbReference type="ChEBI" id="CHEBI:30616"/>
        <dbReference type="ChEBI" id="CHEBI:58702"/>
        <dbReference type="ChEBI" id="CHEBI:456216"/>
        <dbReference type="EC" id="2.7.1.40"/>
    </reaction>
</comment>
<comment type="cofactor">
    <cofactor evidence="1">
        <name>Mg(2+)</name>
        <dbReference type="ChEBI" id="CHEBI:18420"/>
    </cofactor>
</comment>
<comment type="cofactor">
    <cofactor evidence="1">
        <name>K(+)</name>
        <dbReference type="ChEBI" id="CHEBI:29103"/>
    </cofactor>
</comment>
<comment type="pathway">
    <text>Carbohydrate degradation; glycolysis; pyruvate from D-glyceraldehyde 3-phosphate: step 5/5.</text>
</comment>
<comment type="subcellular location">
    <subcellularLocation>
        <location>Plastid</location>
        <location>Chloroplast</location>
    </subcellularLocation>
</comment>
<comment type="tissue specificity">
    <text>Highest levels in roots. Also found in stems, leaves and flowers.</text>
</comment>
<comment type="developmental stage">
    <text>Most abundantly expressed during the early globular to early cotyledonary stages of embryo development.</text>
</comment>
<comment type="similarity">
    <text evidence="5">Belongs to the pyruvate kinase family.</text>
</comment>
<accession>Q40545</accession>
<evidence type="ECO:0000250" key="1"/>
<evidence type="ECO:0000250" key="2">
    <source>
        <dbReference type="UniProtKB" id="P14618"/>
    </source>
</evidence>
<evidence type="ECO:0000255" key="3"/>
<evidence type="ECO:0000256" key="4">
    <source>
        <dbReference type="SAM" id="MobiDB-lite"/>
    </source>
</evidence>
<evidence type="ECO:0000305" key="5"/>
<name>KPYA_TOBAC</name>
<proteinExistence type="evidence at transcript level"/>
<dbReference type="EC" id="2.7.1.40"/>
<dbReference type="EMBL" id="Z28373">
    <property type="protein sequence ID" value="CAA82222.1"/>
    <property type="molecule type" value="mRNA"/>
</dbReference>
<dbReference type="PIR" id="S51946">
    <property type="entry name" value="S51946"/>
</dbReference>
<dbReference type="SMR" id="Q40545"/>
<dbReference type="STRING" id="4097.Q40545"/>
<dbReference type="PaxDb" id="4097-Q40545"/>
<dbReference type="UniPathway" id="UPA00109">
    <property type="reaction ID" value="UER00188"/>
</dbReference>
<dbReference type="Proteomes" id="UP000084051">
    <property type="component" value="Unplaced"/>
</dbReference>
<dbReference type="GO" id="GO:0009570">
    <property type="term" value="C:chloroplast stroma"/>
    <property type="evidence" value="ECO:0000318"/>
    <property type="project" value="GO_Central"/>
</dbReference>
<dbReference type="GO" id="GO:0005737">
    <property type="term" value="C:cytoplasm"/>
    <property type="evidence" value="ECO:0000318"/>
    <property type="project" value="GO_Central"/>
</dbReference>
<dbReference type="GO" id="GO:0005524">
    <property type="term" value="F:ATP binding"/>
    <property type="evidence" value="ECO:0007669"/>
    <property type="project" value="UniProtKB-KW"/>
</dbReference>
<dbReference type="GO" id="GO:0016301">
    <property type="term" value="F:kinase activity"/>
    <property type="evidence" value="ECO:0007669"/>
    <property type="project" value="UniProtKB-KW"/>
</dbReference>
<dbReference type="GO" id="GO:0000287">
    <property type="term" value="F:magnesium ion binding"/>
    <property type="evidence" value="ECO:0007669"/>
    <property type="project" value="InterPro"/>
</dbReference>
<dbReference type="GO" id="GO:0030955">
    <property type="term" value="F:potassium ion binding"/>
    <property type="evidence" value="ECO:0007669"/>
    <property type="project" value="InterPro"/>
</dbReference>
<dbReference type="GO" id="GO:0004743">
    <property type="term" value="F:pyruvate kinase activity"/>
    <property type="evidence" value="ECO:0000318"/>
    <property type="project" value="GO_Central"/>
</dbReference>
<dbReference type="GO" id="GO:0006096">
    <property type="term" value="P:glycolytic process"/>
    <property type="evidence" value="ECO:0000318"/>
    <property type="project" value="GO_Central"/>
</dbReference>
<dbReference type="FunFam" id="2.40.33.10:FF:000005">
    <property type="entry name" value="Pyruvate kinase"/>
    <property type="match status" value="1"/>
</dbReference>
<dbReference type="FunFam" id="3.20.20.60:FF:000025">
    <property type="entry name" value="Pyruvate kinase"/>
    <property type="match status" value="1"/>
</dbReference>
<dbReference type="FunFam" id="3.40.1380.20:FF:000010">
    <property type="entry name" value="Pyruvate kinase"/>
    <property type="match status" value="1"/>
</dbReference>
<dbReference type="Gene3D" id="3.20.20.60">
    <property type="entry name" value="Phosphoenolpyruvate-binding domains"/>
    <property type="match status" value="1"/>
</dbReference>
<dbReference type="Gene3D" id="2.40.33.10">
    <property type="entry name" value="PK beta-barrel domain-like"/>
    <property type="match status" value="1"/>
</dbReference>
<dbReference type="Gene3D" id="3.40.1380.20">
    <property type="entry name" value="Pyruvate kinase, C-terminal domain"/>
    <property type="match status" value="1"/>
</dbReference>
<dbReference type="InterPro" id="IPR001697">
    <property type="entry name" value="Pyr_Knase"/>
</dbReference>
<dbReference type="InterPro" id="IPR015813">
    <property type="entry name" value="Pyrv/PenolPyrv_kinase-like_dom"/>
</dbReference>
<dbReference type="InterPro" id="IPR040442">
    <property type="entry name" value="Pyrv_kinase-like_dom_sf"/>
</dbReference>
<dbReference type="InterPro" id="IPR011037">
    <property type="entry name" value="Pyrv_Knase-like_insert_dom_sf"/>
</dbReference>
<dbReference type="InterPro" id="IPR018209">
    <property type="entry name" value="Pyrv_Knase_AS"/>
</dbReference>
<dbReference type="InterPro" id="IPR015793">
    <property type="entry name" value="Pyrv_Knase_brl"/>
</dbReference>
<dbReference type="InterPro" id="IPR015795">
    <property type="entry name" value="Pyrv_Knase_C"/>
</dbReference>
<dbReference type="InterPro" id="IPR036918">
    <property type="entry name" value="Pyrv_Knase_C_sf"/>
</dbReference>
<dbReference type="InterPro" id="IPR015806">
    <property type="entry name" value="Pyrv_Knase_insert_dom_sf"/>
</dbReference>
<dbReference type="NCBIfam" id="TIGR01064">
    <property type="entry name" value="pyruv_kin"/>
    <property type="match status" value="1"/>
</dbReference>
<dbReference type="PANTHER" id="PTHR11817">
    <property type="entry name" value="PYRUVATE KINASE"/>
    <property type="match status" value="1"/>
</dbReference>
<dbReference type="Pfam" id="PF00224">
    <property type="entry name" value="PK"/>
    <property type="match status" value="1"/>
</dbReference>
<dbReference type="Pfam" id="PF02887">
    <property type="entry name" value="PK_C"/>
    <property type="match status" value="1"/>
</dbReference>
<dbReference type="PRINTS" id="PR01050">
    <property type="entry name" value="PYRUVTKNASE"/>
</dbReference>
<dbReference type="SUPFAM" id="SSF51621">
    <property type="entry name" value="Phosphoenolpyruvate/pyruvate domain"/>
    <property type="match status" value="1"/>
</dbReference>
<dbReference type="SUPFAM" id="SSF50800">
    <property type="entry name" value="PK beta-barrel domain-like"/>
    <property type="match status" value="1"/>
</dbReference>
<dbReference type="SUPFAM" id="SSF52935">
    <property type="entry name" value="PK C-terminal domain-like"/>
    <property type="match status" value="1"/>
</dbReference>
<dbReference type="PROSITE" id="PS00110">
    <property type="entry name" value="PYRUVATE_KINASE"/>
    <property type="match status" value="1"/>
</dbReference>
<sequence>MSQALNFFVSSSSRSPATFTISRPSVFPSTGSLRLLVKKSLRTLVVEASSAAASDLDEPQSSPVLVSENGSGGVLSSATQEYGRNAAPGTDSSSIEVDTVTEAELKENGFRSTRRTKLICTIGPATCGFEQLERLAEGGMNVARINMCHGTREWHRMVIERLRRLNEEKGFAVAIMMDTEGSEIHMGDLGGASSAKAEDGEIWNFTVRSFDPPLPERTVTVNYDGFAEDVKVGDELLVDGGMVRFEVIEKIGPDVKCLCTDPGLLLPRANLTFWRDGKLVRERNAMLPTISSKDWLDIDFGIAEGVDFIAVSFVKSAEVIKHLKSYIQARARDSDISVIAKIESIDSLKNLEEIIQASDGAMVARGDLGAQIPLEQVPSEQQKIVQICRQLNRPVIVASQLLESMIEYPIPTRAEVADVSEAVRQRGDALMLSGESAMGQFPEKALTVLRSVSLRIERMWREQKRHEVIELPSIASSFSDSISEEICNSAAKMANNLEVDALFVYTKNGHMASLLSRCRPDCPIFAFTTTTSVRRRLNLQWGLMPFRLSFSDDMESNLNKTFSLLKARGMIKSGDLIIAVSDMLQSIQVMNVP</sequence>
<organism>
    <name type="scientific">Nicotiana tabacum</name>
    <name type="common">Common tobacco</name>
    <dbReference type="NCBI Taxonomy" id="4097"/>
    <lineage>
        <taxon>Eukaryota</taxon>
        <taxon>Viridiplantae</taxon>
        <taxon>Streptophyta</taxon>
        <taxon>Embryophyta</taxon>
        <taxon>Tracheophyta</taxon>
        <taxon>Spermatophyta</taxon>
        <taxon>Magnoliopsida</taxon>
        <taxon>eudicotyledons</taxon>
        <taxon>Gunneridae</taxon>
        <taxon>Pentapetalae</taxon>
        <taxon>asterids</taxon>
        <taxon>lamiids</taxon>
        <taxon>Solanales</taxon>
        <taxon>Solanaceae</taxon>
        <taxon>Nicotianoideae</taxon>
        <taxon>Nicotianeae</taxon>
        <taxon>Nicotiana</taxon>
    </lineage>
</organism>
<feature type="transit peptide" description="Chloroplast" evidence="3">
    <location>
        <begin position="1"/>
        <end status="unknown"/>
    </location>
</feature>
<feature type="chain" id="PRO_0000016663" description="Pyruvate kinase isozyme A, chloroplastic">
    <location>
        <begin status="unknown"/>
        <end position="593"/>
    </location>
</feature>
<feature type="region of interest" description="Disordered" evidence="4">
    <location>
        <begin position="57"/>
        <end position="94"/>
    </location>
</feature>
<feature type="binding site" evidence="1">
    <location>
        <position position="144"/>
    </location>
    <ligand>
        <name>substrate</name>
    </ligand>
</feature>
<feature type="binding site" evidence="2">
    <location>
        <begin position="146"/>
        <end position="149"/>
    </location>
    <ligand>
        <name>ATP</name>
        <dbReference type="ChEBI" id="CHEBI:30616"/>
    </ligand>
</feature>
<feature type="binding site" evidence="1">
    <location>
        <position position="146"/>
    </location>
    <ligand>
        <name>K(+)</name>
        <dbReference type="ChEBI" id="CHEBI:29103"/>
    </ligand>
</feature>
<feature type="binding site" evidence="1">
    <location>
        <position position="178"/>
    </location>
    <ligand>
        <name>K(+)</name>
        <dbReference type="ChEBI" id="CHEBI:29103"/>
    </ligand>
</feature>
<feature type="binding site" evidence="1">
    <location>
        <position position="179"/>
    </location>
    <ligand>
        <name>K(+)</name>
        <dbReference type="ChEBI" id="CHEBI:29103"/>
    </ligand>
</feature>
<feature type="binding site" evidence="3">
    <location>
        <position position="343"/>
    </location>
    <ligand>
        <name>Mg(2+)</name>
        <dbReference type="ChEBI" id="CHEBI:18420"/>
    </ligand>
</feature>
<feature type="binding site" evidence="1">
    <location>
        <position position="366"/>
    </location>
    <ligand>
        <name>substrate</name>
    </ligand>
</feature>
<feature type="binding site" evidence="1">
    <location>
        <position position="367"/>
    </location>
    <ligand>
        <name>Mg(2+)</name>
        <dbReference type="ChEBI" id="CHEBI:18420"/>
    </ligand>
</feature>
<feature type="binding site" evidence="1">
    <location>
        <position position="367"/>
    </location>
    <ligand>
        <name>substrate</name>
    </ligand>
</feature>
<feature type="binding site" evidence="1">
    <location>
        <position position="399"/>
    </location>
    <ligand>
        <name>substrate</name>
    </ligand>
</feature>
<feature type="site" description="Transition state stabilizer" evidence="1">
    <location>
        <position position="341"/>
    </location>
</feature>